<gene>
    <name evidence="5" type="primary">RPL5A</name>
    <name evidence="7" type="synonym">AE6</name>
    <name evidence="6" type="synonym">ATL5</name>
    <name evidence="9" type="synonym">OLI5</name>
    <name evidence="8" type="synonym">PGY3</name>
    <name evidence="12" type="ordered locus">At3g25520</name>
    <name evidence="13" type="ORF">MWL2.17</name>
</gene>
<reference key="1">
    <citation type="journal article" date="2003" name="Nucleic Acids Res.">
        <title>Identification and characterization of transcription factor IIIA and ribosomal protein L5 from Arabidopsis thaliana.</title>
        <authorList>
            <person name="Mathieu O."/>
            <person name="Yukawa Y."/>
            <person name="Prieto J.-L."/>
            <person name="Vaillant I."/>
            <person name="Sugiura M."/>
            <person name="Tourmente S."/>
        </authorList>
    </citation>
    <scope>NUCLEOTIDE SEQUENCE [MRNA]</scope>
    <scope>SUBCELLULAR LOCATION</scope>
</reference>
<reference key="2">
    <citation type="journal article" date="2000" name="DNA Res.">
        <title>Structural analysis of Arabidopsis thaliana chromosome 3. I. Sequence features of the regions of 4,504,864 bp covered by sixty P1 and TAC clones.</title>
        <authorList>
            <person name="Sato S."/>
            <person name="Nakamura Y."/>
            <person name="Kaneko T."/>
            <person name="Katoh T."/>
            <person name="Asamizu E."/>
            <person name="Tabata S."/>
        </authorList>
    </citation>
    <scope>NUCLEOTIDE SEQUENCE [LARGE SCALE GENOMIC DNA]</scope>
    <source>
        <strain>cv. Columbia</strain>
    </source>
</reference>
<reference key="3">
    <citation type="journal article" date="2017" name="Plant J.">
        <title>Araport11: a complete reannotation of the Arabidopsis thaliana reference genome.</title>
        <authorList>
            <person name="Cheng C.Y."/>
            <person name="Krishnakumar V."/>
            <person name="Chan A.P."/>
            <person name="Thibaud-Nissen F."/>
            <person name="Schobel S."/>
            <person name="Town C.D."/>
        </authorList>
    </citation>
    <scope>GENOME REANNOTATION</scope>
    <source>
        <strain>cv. Columbia</strain>
    </source>
</reference>
<reference key="4">
    <citation type="journal article" date="2003" name="Science">
        <title>Empirical analysis of transcriptional activity in the Arabidopsis genome.</title>
        <authorList>
            <person name="Yamada K."/>
            <person name="Lim J."/>
            <person name="Dale J.M."/>
            <person name="Chen H."/>
            <person name="Shinn P."/>
            <person name="Palm C.J."/>
            <person name="Southwick A.M."/>
            <person name="Wu H.C."/>
            <person name="Kim C.J."/>
            <person name="Nguyen M."/>
            <person name="Pham P.K."/>
            <person name="Cheuk R.F."/>
            <person name="Karlin-Newmann G."/>
            <person name="Liu S.X."/>
            <person name="Lam B."/>
            <person name="Sakano H."/>
            <person name="Wu T."/>
            <person name="Yu G."/>
            <person name="Miranda M."/>
            <person name="Quach H.L."/>
            <person name="Tripp M."/>
            <person name="Chang C.H."/>
            <person name="Lee J.M."/>
            <person name="Toriumi M.J."/>
            <person name="Chan M.M."/>
            <person name="Tang C.C."/>
            <person name="Onodera C.S."/>
            <person name="Deng J.M."/>
            <person name="Akiyama K."/>
            <person name="Ansari Y."/>
            <person name="Arakawa T."/>
            <person name="Banh J."/>
            <person name="Banno F."/>
            <person name="Bowser L."/>
            <person name="Brooks S.Y."/>
            <person name="Carninci P."/>
            <person name="Chao Q."/>
            <person name="Choy N."/>
            <person name="Enju A."/>
            <person name="Goldsmith A.D."/>
            <person name="Gurjal M."/>
            <person name="Hansen N.F."/>
            <person name="Hayashizaki Y."/>
            <person name="Johnson-Hopson C."/>
            <person name="Hsuan V.W."/>
            <person name="Iida K."/>
            <person name="Karnes M."/>
            <person name="Khan S."/>
            <person name="Koesema E."/>
            <person name="Ishida J."/>
            <person name="Jiang P.X."/>
            <person name="Jones T."/>
            <person name="Kawai J."/>
            <person name="Kamiya A."/>
            <person name="Meyers C."/>
            <person name="Nakajima M."/>
            <person name="Narusaka M."/>
            <person name="Seki M."/>
            <person name="Sakurai T."/>
            <person name="Satou M."/>
            <person name="Tamse R."/>
            <person name="Vaysberg M."/>
            <person name="Wallender E.K."/>
            <person name="Wong C."/>
            <person name="Yamamura Y."/>
            <person name="Yuan S."/>
            <person name="Shinozaki K."/>
            <person name="Davis R.W."/>
            <person name="Theologis A."/>
            <person name="Ecker J.R."/>
        </authorList>
    </citation>
    <scope>NUCLEOTIDE SEQUENCE [LARGE SCALE MRNA]</scope>
    <source>
        <strain>cv. Columbia</strain>
    </source>
</reference>
<reference key="5">
    <citation type="submission" date="2002-03" db="EMBL/GenBank/DDBJ databases">
        <title>Full-length cDNA from Arabidopsis thaliana.</title>
        <authorList>
            <person name="Brover V.V."/>
            <person name="Troukhan M.E."/>
            <person name="Alexandrov N.A."/>
            <person name="Lu Y.-P."/>
            <person name="Flavell R.B."/>
            <person name="Feldmann K.A."/>
        </authorList>
    </citation>
    <scope>NUCLEOTIDE SEQUENCE [LARGE SCALE MRNA]</scope>
</reference>
<reference key="6">
    <citation type="journal article" date="2009" name="DNA Res.">
        <title>Analysis of multiple occurrences of alternative splicing events in Arabidopsis thaliana using novel sequenced full-length cDNAs.</title>
        <authorList>
            <person name="Iida K."/>
            <person name="Fukami-Kobayashi K."/>
            <person name="Toyoda A."/>
            <person name="Sakaki Y."/>
            <person name="Kobayashi M."/>
            <person name="Seki M."/>
            <person name="Shinozaki K."/>
        </authorList>
    </citation>
    <scope>NUCLEOTIDE SEQUENCE [LARGE SCALE MRNA] OF 100-301</scope>
    <source>
        <strain>cv. Columbia</strain>
        <tissue>Flower</tissue>
        <tissue>Silique</tissue>
    </source>
</reference>
<reference key="7">
    <citation type="journal article" date="2001" name="Plant Physiol.">
        <title>The organization of cytoplasmic ribosomal protein genes in the Arabidopsis genome.</title>
        <authorList>
            <person name="Barakat A."/>
            <person name="Szick-Miranda K."/>
            <person name="Chang I.-F."/>
            <person name="Guyot R."/>
            <person name="Blanc G."/>
            <person name="Cooke R."/>
            <person name="Delseny M."/>
            <person name="Bailey-Serres J."/>
        </authorList>
    </citation>
    <scope>GENE FAMILY ORGANIZATION</scope>
    <scope>NOMENCLATURE</scope>
</reference>
<reference key="8">
    <citation type="journal article" date="2007" name="Mol. Cell. Proteomics">
        <title>Multidimensional protein identification technology (MudPIT) analysis of ubiquitinated proteins in plants.</title>
        <authorList>
            <person name="Maor R."/>
            <person name="Jones A."/>
            <person name="Nuehse T.S."/>
            <person name="Studholme D.J."/>
            <person name="Peck S.C."/>
            <person name="Shirasu K."/>
        </authorList>
    </citation>
    <scope>IDENTIFICATION BY MASS SPECTROMETRY [LARGE SCALE ANALYSIS]</scope>
    <source>
        <strain>cv. Landsberg erecta</strain>
    </source>
</reference>
<reference key="9">
    <citation type="journal article" date="2008" name="Development">
        <title>Three PIGGYBACK genes that specifically influence leaf patterning encode ribosomal proteins.</title>
        <authorList>
            <person name="Pinon V."/>
            <person name="Etchells J.P."/>
            <person name="Rossignol P."/>
            <person name="Collier S.A."/>
            <person name="Arroyo J.M."/>
            <person name="Martienssen R.A."/>
            <person name="Byrne M.E."/>
        </authorList>
    </citation>
    <scope>FUNCTION</scope>
    <scope>DISRUPTION PHENOTYPE</scope>
</reference>
<reference key="10">
    <citation type="journal article" date="2008" name="Development">
        <title>Ribosomal proteins promote leaf adaxial identity.</title>
        <authorList>
            <person name="Yao Y."/>
            <person name="Ling Q."/>
            <person name="Wang H."/>
            <person name="Huang H."/>
        </authorList>
    </citation>
    <scope>FUNCTION</scope>
    <scope>DISRUPTION PHENOTYPE</scope>
    <scope>TISSUE SPECIFICITY</scope>
    <scope>DEVELOPMENTAL STAGE</scope>
    <scope>SUBCELLULAR LOCATION</scope>
    <source>
        <strain>cv. Columbia</strain>
        <strain>cv. Landsberg erecta</strain>
    </source>
</reference>
<reference key="11">
    <citation type="journal article" date="2009" name="Plant J.">
        <title>Coordination of cell proliferation and cell expansion mediated by ribosome-related processes in the leaves of Arabidopsis thaliana.</title>
        <authorList>
            <person name="Fujikura U."/>
            <person name="Horiguchi G."/>
            <person name="Ponce M.R."/>
            <person name="Micol J.L."/>
            <person name="Tsukaya H."/>
        </authorList>
    </citation>
    <scope>FUNCTION</scope>
    <scope>DISRUPTION PHENOTYPE</scope>
</reference>
<reference key="12">
    <citation type="journal article" date="2023" name="Plant Cell">
        <title>An updated nomenclature for plant ribosomal protein genes.</title>
        <authorList>
            <person name="Scarpin M.R."/>
            <person name="Busche M."/>
            <person name="Martinez R.E."/>
            <person name="Harper L.C."/>
            <person name="Reiser L."/>
            <person name="Szakonyi D."/>
            <person name="Merchante C."/>
            <person name="Lan T."/>
            <person name="Xiong W."/>
            <person name="Mo B."/>
            <person name="Tang G."/>
            <person name="Chen X."/>
            <person name="Bailey-Serres J."/>
            <person name="Browning K.S."/>
            <person name="Brunkard J.O."/>
        </authorList>
    </citation>
    <scope>NOMENCLATURE</scope>
</reference>
<proteinExistence type="evidence at protein level"/>
<name>RL51_ARATH</name>
<dbReference type="EMBL" id="AY186611">
    <property type="protein sequence ID" value="AAO73340.1"/>
    <property type="molecule type" value="mRNA"/>
</dbReference>
<dbReference type="EMBL" id="AB025639">
    <property type="status" value="NOT_ANNOTATED_CDS"/>
    <property type="molecule type" value="Genomic_DNA"/>
</dbReference>
<dbReference type="EMBL" id="CP002686">
    <property type="protein sequence ID" value="AEE77019.1"/>
    <property type="molecule type" value="Genomic_DNA"/>
</dbReference>
<dbReference type="EMBL" id="CP002686">
    <property type="protein sequence ID" value="ANM65929.1"/>
    <property type="molecule type" value="Genomic_DNA"/>
</dbReference>
<dbReference type="EMBL" id="AY054161">
    <property type="protein sequence ID" value="AAL06822.1"/>
    <property type="molecule type" value="mRNA"/>
</dbReference>
<dbReference type="EMBL" id="AY065103">
    <property type="protein sequence ID" value="AAL38279.1"/>
    <property type="molecule type" value="mRNA"/>
</dbReference>
<dbReference type="EMBL" id="AY081701">
    <property type="protein sequence ID" value="AAM10263.1"/>
    <property type="molecule type" value="mRNA"/>
</dbReference>
<dbReference type="EMBL" id="AY136319">
    <property type="protein sequence ID" value="AAM96985.1"/>
    <property type="molecule type" value="mRNA"/>
</dbReference>
<dbReference type="EMBL" id="BT000411">
    <property type="protein sequence ID" value="AAN15730.1"/>
    <property type="molecule type" value="mRNA"/>
</dbReference>
<dbReference type="EMBL" id="BT002427">
    <property type="protein sequence ID" value="AAO00787.1"/>
    <property type="molecule type" value="mRNA"/>
</dbReference>
<dbReference type="EMBL" id="BT008705">
    <property type="protein sequence ID" value="AAP42718.1"/>
    <property type="molecule type" value="mRNA"/>
</dbReference>
<dbReference type="EMBL" id="AY087197">
    <property type="protein sequence ID" value="AAM64753.1"/>
    <property type="molecule type" value="mRNA"/>
</dbReference>
<dbReference type="EMBL" id="AK317600">
    <property type="protein sequence ID" value="BAH20263.1"/>
    <property type="molecule type" value="mRNA"/>
</dbReference>
<dbReference type="RefSeq" id="NP_001327862.1">
    <molecule id="Q8LBI1-1"/>
    <property type="nucleotide sequence ID" value="NM_001338753.1"/>
</dbReference>
<dbReference type="RefSeq" id="NP_566767.1">
    <molecule id="Q8LBI1-1"/>
    <property type="nucleotide sequence ID" value="NM_113448.5"/>
</dbReference>
<dbReference type="SMR" id="Q8LBI1"/>
<dbReference type="BioGRID" id="7469">
    <property type="interactions" value="111"/>
</dbReference>
<dbReference type="FunCoup" id="Q8LBI1">
    <property type="interactions" value="3720"/>
</dbReference>
<dbReference type="IntAct" id="Q8LBI1">
    <property type="interactions" value="7"/>
</dbReference>
<dbReference type="STRING" id="3702.Q8LBI1"/>
<dbReference type="GlyGen" id="Q8LBI1">
    <property type="glycosylation" value="1 site, 1 O-linked glycan (1 site)"/>
</dbReference>
<dbReference type="iPTMnet" id="Q8LBI1"/>
<dbReference type="MetOSite" id="Q8LBI1"/>
<dbReference type="PaxDb" id="3702-AT3G25520.1"/>
<dbReference type="ProteomicsDB" id="236489">
    <molecule id="Q8LBI1-1"/>
</dbReference>
<dbReference type="EnsemblPlants" id="AT3G25520.1">
    <molecule id="Q8LBI1-1"/>
    <property type="protein sequence ID" value="AT3G25520.1"/>
    <property type="gene ID" value="AT3G25520"/>
</dbReference>
<dbReference type="EnsemblPlants" id="AT3G25520.3">
    <molecule id="Q8LBI1-1"/>
    <property type="protein sequence ID" value="AT3G25520.3"/>
    <property type="gene ID" value="AT3G25520"/>
</dbReference>
<dbReference type="GeneID" id="822138"/>
<dbReference type="Gramene" id="AT3G25520.1">
    <molecule id="Q8LBI1-1"/>
    <property type="protein sequence ID" value="AT3G25520.1"/>
    <property type="gene ID" value="AT3G25520"/>
</dbReference>
<dbReference type="Gramene" id="AT3G25520.3">
    <molecule id="Q8LBI1-1"/>
    <property type="protein sequence ID" value="AT3G25520.3"/>
    <property type="gene ID" value="AT3G25520"/>
</dbReference>
<dbReference type="KEGG" id="ath:AT3G25520"/>
<dbReference type="Araport" id="AT3G25520"/>
<dbReference type="TAIR" id="AT3G25520">
    <property type="gene designation" value="ATL5"/>
</dbReference>
<dbReference type="eggNOG" id="KOG0875">
    <property type="taxonomic scope" value="Eukaryota"/>
</dbReference>
<dbReference type="HOGENOM" id="CLU_056222_1_0_1"/>
<dbReference type="InParanoid" id="Q8LBI1"/>
<dbReference type="OMA" id="IYEAQVE"/>
<dbReference type="PhylomeDB" id="Q8LBI1"/>
<dbReference type="CD-CODE" id="4299E36E">
    <property type="entry name" value="Nucleolus"/>
</dbReference>
<dbReference type="PRO" id="PR:Q8LBI1"/>
<dbReference type="Proteomes" id="UP000006548">
    <property type="component" value="Chromosome 3"/>
</dbReference>
<dbReference type="ExpressionAtlas" id="Q8LBI1">
    <property type="expression patterns" value="baseline and differential"/>
</dbReference>
<dbReference type="GO" id="GO:0009507">
    <property type="term" value="C:chloroplast"/>
    <property type="evidence" value="ECO:0007005"/>
    <property type="project" value="TAIR"/>
</dbReference>
<dbReference type="GO" id="GO:0005737">
    <property type="term" value="C:cytoplasm"/>
    <property type="evidence" value="ECO:0000314"/>
    <property type="project" value="UniProtKB"/>
</dbReference>
<dbReference type="GO" id="GO:0005829">
    <property type="term" value="C:cytosol"/>
    <property type="evidence" value="ECO:0007005"/>
    <property type="project" value="TAIR"/>
</dbReference>
<dbReference type="GO" id="GO:0022625">
    <property type="term" value="C:cytosolic large ribosomal subunit"/>
    <property type="evidence" value="ECO:0007005"/>
    <property type="project" value="TAIR"/>
</dbReference>
<dbReference type="GO" id="GO:0022626">
    <property type="term" value="C:cytosolic ribosome"/>
    <property type="evidence" value="ECO:0007005"/>
    <property type="project" value="TAIR"/>
</dbReference>
<dbReference type="GO" id="GO:0005730">
    <property type="term" value="C:nucleolus"/>
    <property type="evidence" value="ECO:0000314"/>
    <property type="project" value="UniProtKB"/>
</dbReference>
<dbReference type="GO" id="GO:0005654">
    <property type="term" value="C:nucleoplasm"/>
    <property type="evidence" value="ECO:0000314"/>
    <property type="project" value="UniProtKB"/>
</dbReference>
<dbReference type="GO" id="GO:0005634">
    <property type="term" value="C:nucleus"/>
    <property type="evidence" value="ECO:0000314"/>
    <property type="project" value="UniProtKB"/>
</dbReference>
<dbReference type="GO" id="GO:0005773">
    <property type="term" value="C:vacuole"/>
    <property type="evidence" value="ECO:0007005"/>
    <property type="project" value="TAIR"/>
</dbReference>
<dbReference type="GO" id="GO:0008097">
    <property type="term" value="F:5S rRNA binding"/>
    <property type="evidence" value="ECO:0000314"/>
    <property type="project" value="TAIR"/>
</dbReference>
<dbReference type="GO" id="GO:0003729">
    <property type="term" value="F:mRNA binding"/>
    <property type="evidence" value="ECO:0000314"/>
    <property type="project" value="TAIR"/>
</dbReference>
<dbReference type="GO" id="GO:0003735">
    <property type="term" value="F:structural constituent of ribosome"/>
    <property type="evidence" value="ECO:0000314"/>
    <property type="project" value="CAFA"/>
</dbReference>
<dbReference type="GO" id="GO:0009955">
    <property type="term" value="P:adaxial/abaxial pattern specification"/>
    <property type="evidence" value="ECO:0000315"/>
    <property type="project" value="UniProtKB"/>
</dbReference>
<dbReference type="GO" id="GO:0051301">
    <property type="term" value="P:cell division"/>
    <property type="evidence" value="ECO:0000315"/>
    <property type="project" value="TAIR"/>
</dbReference>
<dbReference type="GO" id="GO:0009965">
    <property type="term" value="P:leaf morphogenesis"/>
    <property type="evidence" value="ECO:0000315"/>
    <property type="project" value="UniProtKB"/>
</dbReference>
<dbReference type="GO" id="GO:0006913">
    <property type="term" value="P:nucleocytoplasmic transport"/>
    <property type="evidence" value="ECO:0000304"/>
    <property type="project" value="TAIR"/>
</dbReference>
<dbReference type="GO" id="GO:0010015">
    <property type="term" value="P:root morphogenesis"/>
    <property type="evidence" value="ECO:0000315"/>
    <property type="project" value="TAIR"/>
</dbReference>
<dbReference type="GO" id="GO:0006412">
    <property type="term" value="P:translation"/>
    <property type="evidence" value="ECO:0007669"/>
    <property type="project" value="InterPro"/>
</dbReference>
<dbReference type="CDD" id="cd00432">
    <property type="entry name" value="Ribosomal_L18_L5e"/>
    <property type="match status" value="1"/>
</dbReference>
<dbReference type="FunFam" id="3.30.420.100:FF:000002">
    <property type="entry name" value="60S ribosomal protein L5"/>
    <property type="match status" value="1"/>
</dbReference>
<dbReference type="Gene3D" id="3.30.420.100">
    <property type="match status" value="1"/>
</dbReference>
<dbReference type="HAMAP" id="MF_01337_A">
    <property type="entry name" value="Ribosomal_uL18_A"/>
    <property type="match status" value="1"/>
</dbReference>
<dbReference type="InterPro" id="IPR005485">
    <property type="entry name" value="Rbsml_uL18_euk"/>
</dbReference>
<dbReference type="InterPro" id="IPR025607">
    <property type="entry name" value="Ribosomal_uL18_C_euk"/>
</dbReference>
<dbReference type="PANTHER" id="PTHR23410:SF35">
    <property type="entry name" value="LARGE RIBOSOMAL SUBUNIT PROTEIN UL18Y-RELATED"/>
    <property type="match status" value="1"/>
</dbReference>
<dbReference type="PANTHER" id="PTHR23410">
    <property type="entry name" value="RIBOSOMAL PROTEIN L5-RELATED"/>
    <property type="match status" value="1"/>
</dbReference>
<dbReference type="Pfam" id="PF14204">
    <property type="entry name" value="Ribosomal_L18_c"/>
    <property type="match status" value="1"/>
</dbReference>
<dbReference type="Pfam" id="PF17144">
    <property type="entry name" value="Ribosomal_L5e"/>
    <property type="match status" value="1"/>
</dbReference>
<dbReference type="PRINTS" id="PR00058">
    <property type="entry name" value="RIBOSOMALL5"/>
</dbReference>
<dbReference type="SUPFAM" id="SSF53137">
    <property type="entry name" value="Translational machinery components"/>
    <property type="match status" value="1"/>
</dbReference>
<protein>
    <recommendedName>
        <fullName evidence="10">Large ribosomal subunit protein uL18z</fullName>
    </recommendedName>
    <alternativeName>
        <fullName evidence="6">60S ribosomal protein L5-1</fullName>
        <shortName evidence="5">Ribosomal protein L5 A</shortName>
    </alternativeName>
    <alternativeName>
        <fullName evidence="7">Protein ASYMMETRIC LEAVES1/2 ENHANCER 6</fullName>
    </alternativeName>
    <alternativeName>
        <fullName evidence="9">Protein OLIGOCELLULA 5</fullName>
    </alternativeName>
    <alternativeName>
        <fullName evidence="8">Protein PIGGYBACK 3</fullName>
    </alternativeName>
</protein>
<keyword id="KW-0025">Alternative splicing</keyword>
<keyword id="KW-0963">Cytoplasm</keyword>
<keyword id="KW-0217">Developmental protein</keyword>
<keyword id="KW-0539">Nucleus</keyword>
<keyword id="KW-1185">Reference proteome</keyword>
<keyword id="KW-0687">Ribonucleoprotein</keyword>
<keyword id="KW-0689">Ribosomal protein</keyword>
<keyword id="KW-0694">RNA-binding</keyword>
<keyword id="KW-0699">rRNA-binding</keyword>
<evidence type="ECO:0000250" key="1">
    <source>
        <dbReference type="UniProtKB" id="P26321"/>
    </source>
</evidence>
<evidence type="ECO:0000269" key="2">
    <source>
    </source>
</evidence>
<evidence type="ECO:0000269" key="3">
    <source>
    </source>
</evidence>
<evidence type="ECO:0000269" key="4">
    <source>
    </source>
</evidence>
<evidence type="ECO:0000303" key="5">
    <source>
    </source>
</evidence>
<evidence type="ECO:0000303" key="6">
    <source>
    </source>
</evidence>
<evidence type="ECO:0000303" key="7">
    <source>
    </source>
</evidence>
<evidence type="ECO:0000303" key="8">
    <source>
    </source>
</evidence>
<evidence type="ECO:0000303" key="9">
    <source>
    </source>
</evidence>
<evidence type="ECO:0000303" key="10">
    <source>
    </source>
</evidence>
<evidence type="ECO:0000305" key="11"/>
<evidence type="ECO:0000312" key="12">
    <source>
        <dbReference type="Araport" id="AT3G25520"/>
    </source>
</evidence>
<evidence type="ECO:0000312" key="13">
    <source>
        <dbReference type="EMBL" id="AB025639"/>
    </source>
</evidence>
<sequence>MVFVKSTKSNAYFKRYQVKFRRRRDGKTDYRARIRLINQDKNKYNTPKYRFVVRFTNKDIVAQIVSASIAGDIVKASAYAHELPQYGLTVGLTNYAAAYCTGLLLARRVLKMLEMDDEYEGNVEATGEDFSVEPTDSRRPFRALLDVGLIRTTTGNRVFGALKGALDGGLDIPHSDKRFAGFHKENKQLDAEIHRNYIYGGHVSNYMKLLGEDEPEKLQTHFSAYIKKGVEAESIEELYKKVHAAIRADPNPKKTVKPAPKQHKRYNLKKLTYEERKNKLIERVKALNGAGGDDDDEDDEE</sequence>
<organism>
    <name type="scientific">Arabidopsis thaliana</name>
    <name type="common">Mouse-ear cress</name>
    <dbReference type="NCBI Taxonomy" id="3702"/>
    <lineage>
        <taxon>Eukaryota</taxon>
        <taxon>Viridiplantae</taxon>
        <taxon>Streptophyta</taxon>
        <taxon>Embryophyta</taxon>
        <taxon>Tracheophyta</taxon>
        <taxon>Spermatophyta</taxon>
        <taxon>Magnoliopsida</taxon>
        <taxon>eudicotyledons</taxon>
        <taxon>Gunneridae</taxon>
        <taxon>Pentapetalae</taxon>
        <taxon>rosids</taxon>
        <taxon>malvids</taxon>
        <taxon>Brassicales</taxon>
        <taxon>Brassicaceae</taxon>
        <taxon>Camelineae</taxon>
        <taxon>Arabidopsis</taxon>
    </lineage>
</organism>
<comment type="function">
    <text evidence="1 2 3 4">Component of the ribosome, a large ribonucleoprotein complex responsible for the synthesis of proteins in the cell. The small ribosomal subunit (SSU) binds messenger RNAs (mRNAs) and translates the encoded message by selecting cognate aminoacyl-transfer RNA (tRNA) molecules. The large subunit (LSU) contains the ribosomal catalytic site termed the peptidyl transferase center (PTC), which catalyzes the formation of peptide bonds, thereby polymerizing the amino acids delivered by tRNAs into a polypeptide chain. The nascent polypeptides leave the ribosome through a tunnel in the LSU and interact with protein factors that function in enzymatic processing, targeting, and the membrane insertion of nascent chains at the exit of the ribosomal tunnel. Seems involved in the regulation of cell proliferation (PubMed:19392710). Essential in leaf polarity establishment, probably having a role for translation in leaf dorsoventral patterning to specify leaf adaxial identity (PubMed:18305007, PubMed:18305008).</text>
</comment>
<comment type="subunit">
    <text evidence="1">Component of the large ribosomal subunit (LSU).</text>
</comment>
<comment type="subcellular location">
    <subcellularLocation>
        <location evidence="2">Cytoplasm</location>
    </subcellularLocation>
    <subcellularLocation>
        <location evidence="2">Nucleus</location>
    </subcellularLocation>
    <subcellularLocation>
        <location evidence="2">Nucleus</location>
        <location evidence="2">Nucleolus</location>
    </subcellularLocation>
    <subcellularLocation>
        <location evidence="2">Nucleus</location>
        <location evidence="2">Nucleoplasm</location>
    </subcellularLocation>
</comment>
<comment type="alternative products">
    <event type="alternative splicing"/>
    <isoform>
        <id>Q8LBI1-1</id>
        <name>1</name>
        <sequence type="displayed"/>
    </isoform>
    <text>A number of isoforms are produced. According to EST sequences.</text>
</comment>
<comment type="tissue specificity">
    <text evidence="2">Expressed in seedlings, roots, stems, leaves, inflorescences and siliques.</text>
</comment>
<comment type="developmental stage">
    <text evidence="2">Detected in the embryo and leaf primordia at earlier developmental stages (PubMed:18305007). In reproductive organs, expressed in the inflorescence meristem, floral primordia and four types of young floral organs (PubMed:18305007).</text>
</comment>
<comment type="disruption phenotype">
    <text evidence="2 3 4">Moderate reduction in cell number (PubMed:19392710). Slightly pointed leaves and prominent marginal serrations (PubMed:18305008). Delayed leaf growth and abnormal leaf patterning, with the abaxial mesophyll features appearing in the adaxial mesophyll domain (PubMed:18305007). More proximal vein branching in the petiole and reduced number of small veins at later leaf developmental stages (PubMed:18305007). Abnormal inflorescences terminating early and producing several secondary inflorescences (PubMed:18305007). Double mutant ae6-1 as2-101 exhibits an increased number of lotus- and needle-like leaves, rough adaxial surface of expanded leaves (PubMed:18305007). Double mutants oli2 oli5 have further reduced cell number but exhibit also excessive postmitotic cell enlargement in leaves (compensation phenotype) (PubMed:19392710). Plant missing both OLI5 and GIF1/AN3 have a strong compensation phenotype (PubMed:19392710). The double mutant as1 pgy3 exhibits narrow and elongated leaves with adaxial ectopic lamina (PubMed:18305008). The double mutant ae6 as1/2 produces severe abaxialized leaves (PubMed:18305007).</text>
</comment>
<comment type="similarity">
    <text evidence="11">Belongs to the universal ribosomal protein uL18 family.</text>
</comment>
<feature type="chain" id="PRO_0000239919" description="Large ribosomal subunit protein uL18z">
    <location>
        <begin position="1"/>
        <end position="301"/>
    </location>
</feature>
<feature type="sequence conflict" description="In Ref. 6; BAH20263." evidence="11" ref="6">
    <original>H</original>
    <variation>D</variation>
    <location>
        <position position="202"/>
    </location>
</feature>
<feature type="sequence conflict" description="In Ref. 5; AAM64753." evidence="11" ref="5">
    <original>K</original>
    <variation>R</variation>
    <location>
        <position position="253"/>
    </location>
</feature>
<accession>Q8LBI1</accession>
<accession>B9DHP6</accession>
<accession>Q940R7</accession>